<comment type="catalytic activity">
    <reaction evidence="1">
        <text>(2R)-3-phosphoglycerate + ATP = (2R)-3-phospho-glyceroyl phosphate + ADP</text>
        <dbReference type="Rhea" id="RHEA:14801"/>
        <dbReference type="ChEBI" id="CHEBI:30616"/>
        <dbReference type="ChEBI" id="CHEBI:57604"/>
        <dbReference type="ChEBI" id="CHEBI:58272"/>
        <dbReference type="ChEBI" id="CHEBI:456216"/>
        <dbReference type="EC" id="2.7.2.3"/>
    </reaction>
</comment>
<comment type="pathway">
    <text evidence="1">Carbohydrate degradation; glycolysis; pyruvate from D-glyceraldehyde 3-phosphate: step 2/5.</text>
</comment>
<comment type="subunit">
    <text evidence="1">Monomer.</text>
</comment>
<comment type="subcellular location">
    <subcellularLocation>
        <location evidence="1">Cytoplasm</location>
    </subcellularLocation>
</comment>
<comment type="similarity">
    <text evidence="1">Belongs to the phosphoglycerate kinase family.</text>
</comment>
<evidence type="ECO:0000255" key="1">
    <source>
        <dbReference type="HAMAP-Rule" id="MF_00145"/>
    </source>
</evidence>
<sequence length="396" mass="42919">MELPRLENVDLSGKRVFLRVDFNVPVENGKVTDKTRIEKTLPTIELLIKKGARIIIASHLGRPKGQVNPEFSLAPVVETFQSLVKSKVYFSKTVIGEDAIKLSKELKNGEILVIENVRFHKEEEENDPGFSKKLSALADIYVNDAFGAAHRAHSSTEGIARLLPAYAGLLMHKEILELSALLHKPARPFVAIIGGSKVSTKIKVLTNLFDKVNHLLIGGGMAYTFLKSRAIPIGNSLVEKEFEVQAFQLIEKAGVAGIDLQLPVDHIIGDQFNEKAKTKSVDKMGILDGWMGMDIGSKTVSNYEKIIKNAGTIFWNGPMGVFEMDKFASGTMAIAKAVAKSKAKTVVGGGDSIAAINKAGVADKITHISTGGGASLEFMEGRKLPGVEALKKKTSE</sequence>
<gene>
    <name evidence="1" type="primary">pgk</name>
    <name type="ordered locus">LA_1703</name>
</gene>
<name>PGK_LEPIN</name>
<feature type="chain" id="PRO_0000145959" description="Phosphoglycerate kinase">
    <location>
        <begin position="1"/>
        <end position="396"/>
    </location>
</feature>
<feature type="binding site" evidence="1">
    <location>
        <begin position="21"/>
        <end position="23"/>
    </location>
    <ligand>
        <name>substrate</name>
    </ligand>
</feature>
<feature type="binding site" evidence="1">
    <location>
        <position position="36"/>
    </location>
    <ligand>
        <name>substrate</name>
    </ligand>
</feature>
<feature type="binding site" evidence="1">
    <location>
        <begin position="59"/>
        <end position="62"/>
    </location>
    <ligand>
        <name>substrate</name>
    </ligand>
</feature>
<feature type="binding site" evidence="1">
    <location>
        <position position="118"/>
    </location>
    <ligand>
        <name>substrate</name>
    </ligand>
</feature>
<feature type="binding site" evidence="1">
    <location>
        <position position="151"/>
    </location>
    <ligand>
        <name>substrate</name>
    </ligand>
</feature>
<feature type="binding site" evidence="1">
    <location>
        <position position="201"/>
    </location>
    <ligand>
        <name>ATP</name>
        <dbReference type="ChEBI" id="CHEBI:30616"/>
    </ligand>
</feature>
<feature type="binding site" evidence="1">
    <location>
        <position position="292"/>
    </location>
    <ligand>
        <name>ATP</name>
        <dbReference type="ChEBI" id="CHEBI:30616"/>
    </ligand>
</feature>
<feature type="binding site" evidence="1">
    <location>
        <position position="323"/>
    </location>
    <ligand>
        <name>ATP</name>
        <dbReference type="ChEBI" id="CHEBI:30616"/>
    </ligand>
</feature>
<feature type="binding site" evidence="1">
    <location>
        <begin position="349"/>
        <end position="352"/>
    </location>
    <ligand>
        <name>ATP</name>
        <dbReference type="ChEBI" id="CHEBI:30616"/>
    </ligand>
</feature>
<dbReference type="EC" id="2.7.2.3" evidence="1"/>
<dbReference type="EMBL" id="AE010300">
    <property type="protein sequence ID" value="AAN48902.1"/>
    <property type="molecule type" value="Genomic_DNA"/>
</dbReference>
<dbReference type="RefSeq" id="NP_711884.1">
    <property type="nucleotide sequence ID" value="NC_004342.2"/>
</dbReference>
<dbReference type="RefSeq" id="WP_000422650.1">
    <property type="nucleotide sequence ID" value="NC_004342.2"/>
</dbReference>
<dbReference type="SMR" id="Q8F5H8"/>
<dbReference type="FunCoup" id="Q8F5H8">
    <property type="interactions" value="432"/>
</dbReference>
<dbReference type="STRING" id="189518.LA_1703"/>
<dbReference type="PaxDb" id="189518-LA_1703"/>
<dbReference type="EnsemblBacteria" id="AAN48902">
    <property type="protein sequence ID" value="AAN48902"/>
    <property type="gene ID" value="LA_1703"/>
</dbReference>
<dbReference type="KEGG" id="lil:LA_1703"/>
<dbReference type="PATRIC" id="fig|189518.3.peg.1696"/>
<dbReference type="HOGENOM" id="CLU_025427_0_2_12"/>
<dbReference type="InParanoid" id="Q8F5H8"/>
<dbReference type="OrthoDB" id="9808460at2"/>
<dbReference type="UniPathway" id="UPA00109">
    <property type="reaction ID" value="UER00185"/>
</dbReference>
<dbReference type="Proteomes" id="UP000001408">
    <property type="component" value="Chromosome I"/>
</dbReference>
<dbReference type="GO" id="GO:0005829">
    <property type="term" value="C:cytosol"/>
    <property type="evidence" value="ECO:0000318"/>
    <property type="project" value="GO_Central"/>
</dbReference>
<dbReference type="GO" id="GO:0043531">
    <property type="term" value="F:ADP binding"/>
    <property type="evidence" value="ECO:0000318"/>
    <property type="project" value="GO_Central"/>
</dbReference>
<dbReference type="GO" id="GO:0005524">
    <property type="term" value="F:ATP binding"/>
    <property type="evidence" value="ECO:0000318"/>
    <property type="project" value="GO_Central"/>
</dbReference>
<dbReference type="GO" id="GO:0004618">
    <property type="term" value="F:phosphoglycerate kinase activity"/>
    <property type="evidence" value="ECO:0000318"/>
    <property type="project" value="GO_Central"/>
</dbReference>
<dbReference type="GO" id="GO:0006094">
    <property type="term" value="P:gluconeogenesis"/>
    <property type="evidence" value="ECO:0000318"/>
    <property type="project" value="GO_Central"/>
</dbReference>
<dbReference type="GO" id="GO:0006096">
    <property type="term" value="P:glycolytic process"/>
    <property type="evidence" value="ECO:0000318"/>
    <property type="project" value="GO_Central"/>
</dbReference>
<dbReference type="CDD" id="cd00318">
    <property type="entry name" value="Phosphoglycerate_kinase"/>
    <property type="match status" value="1"/>
</dbReference>
<dbReference type="FunFam" id="3.40.50.1260:FF:000002">
    <property type="entry name" value="Phosphoglycerate kinase"/>
    <property type="match status" value="1"/>
</dbReference>
<dbReference type="FunFam" id="3.40.50.1260:FF:000007">
    <property type="entry name" value="Phosphoglycerate kinase"/>
    <property type="match status" value="1"/>
</dbReference>
<dbReference type="Gene3D" id="3.40.50.1260">
    <property type="entry name" value="Phosphoglycerate kinase, N-terminal domain"/>
    <property type="match status" value="2"/>
</dbReference>
<dbReference type="HAMAP" id="MF_00145">
    <property type="entry name" value="Phosphoglyc_kinase"/>
    <property type="match status" value="1"/>
</dbReference>
<dbReference type="InterPro" id="IPR001576">
    <property type="entry name" value="Phosphoglycerate_kinase"/>
</dbReference>
<dbReference type="InterPro" id="IPR015911">
    <property type="entry name" value="Phosphoglycerate_kinase_CS"/>
</dbReference>
<dbReference type="InterPro" id="IPR015824">
    <property type="entry name" value="Phosphoglycerate_kinase_N"/>
</dbReference>
<dbReference type="InterPro" id="IPR036043">
    <property type="entry name" value="Phosphoglycerate_kinase_sf"/>
</dbReference>
<dbReference type="PANTHER" id="PTHR11406">
    <property type="entry name" value="PHOSPHOGLYCERATE KINASE"/>
    <property type="match status" value="1"/>
</dbReference>
<dbReference type="PANTHER" id="PTHR11406:SF23">
    <property type="entry name" value="PHOSPHOGLYCERATE KINASE 1, CHLOROPLASTIC-RELATED"/>
    <property type="match status" value="1"/>
</dbReference>
<dbReference type="Pfam" id="PF00162">
    <property type="entry name" value="PGK"/>
    <property type="match status" value="1"/>
</dbReference>
<dbReference type="PIRSF" id="PIRSF000724">
    <property type="entry name" value="Pgk"/>
    <property type="match status" value="1"/>
</dbReference>
<dbReference type="PRINTS" id="PR00477">
    <property type="entry name" value="PHGLYCKINASE"/>
</dbReference>
<dbReference type="SUPFAM" id="SSF53748">
    <property type="entry name" value="Phosphoglycerate kinase"/>
    <property type="match status" value="1"/>
</dbReference>
<dbReference type="PROSITE" id="PS00111">
    <property type="entry name" value="PGLYCERATE_KINASE"/>
    <property type="match status" value="1"/>
</dbReference>
<accession>Q8F5H8</accession>
<organism>
    <name type="scientific">Leptospira interrogans serogroup Icterohaemorrhagiae serovar Lai (strain 56601)</name>
    <dbReference type="NCBI Taxonomy" id="189518"/>
    <lineage>
        <taxon>Bacteria</taxon>
        <taxon>Pseudomonadati</taxon>
        <taxon>Spirochaetota</taxon>
        <taxon>Spirochaetia</taxon>
        <taxon>Leptospirales</taxon>
        <taxon>Leptospiraceae</taxon>
        <taxon>Leptospira</taxon>
    </lineage>
</organism>
<keyword id="KW-0067">ATP-binding</keyword>
<keyword id="KW-0963">Cytoplasm</keyword>
<keyword id="KW-0324">Glycolysis</keyword>
<keyword id="KW-0418">Kinase</keyword>
<keyword id="KW-0547">Nucleotide-binding</keyword>
<keyword id="KW-1185">Reference proteome</keyword>
<keyword id="KW-0808">Transferase</keyword>
<proteinExistence type="inferred from homology"/>
<reference key="1">
    <citation type="journal article" date="2003" name="Nature">
        <title>Unique physiological and pathogenic features of Leptospira interrogans revealed by whole-genome sequencing.</title>
        <authorList>
            <person name="Ren S.-X."/>
            <person name="Fu G."/>
            <person name="Jiang X.-G."/>
            <person name="Zeng R."/>
            <person name="Miao Y.-G."/>
            <person name="Xu H."/>
            <person name="Zhang Y.-X."/>
            <person name="Xiong H."/>
            <person name="Lu G."/>
            <person name="Lu L.-F."/>
            <person name="Jiang H.-Q."/>
            <person name="Jia J."/>
            <person name="Tu Y.-F."/>
            <person name="Jiang J.-X."/>
            <person name="Gu W.-Y."/>
            <person name="Zhang Y.-Q."/>
            <person name="Cai Z."/>
            <person name="Sheng H.-H."/>
            <person name="Yin H.-F."/>
            <person name="Zhang Y."/>
            <person name="Zhu G.-F."/>
            <person name="Wan M."/>
            <person name="Huang H.-L."/>
            <person name="Qian Z."/>
            <person name="Wang S.-Y."/>
            <person name="Ma W."/>
            <person name="Yao Z.-J."/>
            <person name="Shen Y."/>
            <person name="Qiang B.-Q."/>
            <person name="Xia Q.-C."/>
            <person name="Guo X.-K."/>
            <person name="Danchin A."/>
            <person name="Saint Girons I."/>
            <person name="Somerville R.L."/>
            <person name="Wen Y.-M."/>
            <person name="Shi M.-H."/>
            <person name="Chen Z."/>
            <person name="Xu J.-G."/>
            <person name="Zhao G.-P."/>
        </authorList>
    </citation>
    <scope>NUCLEOTIDE SEQUENCE [LARGE SCALE GENOMIC DNA]</scope>
    <source>
        <strain>56601</strain>
    </source>
</reference>
<protein>
    <recommendedName>
        <fullName evidence="1">Phosphoglycerate kinase</fullName>
        <ecNumber evidence="1">2.7.2.3</ecNumber>
    </recommendedName>
</protein>